<dbReference type="EMBL" id="AF401625">
    <property type="protein sequence ID" value="AAK94474.1"/>
    <property type="molecule type" value="mRNA"/>
</dbReference>
<dbReference type="EMBL" id="AF053498">
    <property type="protein sequence ID" value="AAC97076.1"/>
    <property type="molecule type" value="mRNA"/>
</dbReference>
<dbReference type="EMBL" id="AF367704">
    <property type="protein sequence ID" value="AAK63249.1"/>
    <property type="molecule type" value="Genomic_DNA"/>
</dbReference>
<dbReference type="EMBL" id="AF367706">
    <property type="protein sequence ID" value="AAK63250.1"/>
    <property type="molecule type" value="Genomic_DNA"/>
</dbReference>
<dbReference type="EMBL" id="AF130770">
    <property type="protein sequence ID" value="AAF36716.1"/>
    <property type="molecule type" value="Genomic_DNA"/>
</dbReference>
<dbReference type="RefSeq" id="NP_001157434.1">
    <property type="nucleotide sequence ID" value="NM_001163962.2"/>
</dbReference>
<dbReference type="SMR" id="Q95MD2"/>
<dbReference type="FunCoup" id="Q95MD2">
    <property type="interactions" value="492"/>
</dbReference>
<dbReference type="STRING" id="9796.ENSECAP00000000163"/>
<dbReference type="GlyCosmos" id="Q95MD2">
    <property type="glycosylation" value="5 sites, No reported glycans"/>
</dbReference>
<dbReference type="PaxDb" id="9796-ENSECAP00000000163"/>
<dbReference type="Ensembl" id="ENSECAT00000034663.1">
    <property type="protein sequence ID" value="ENSECAP00000030330.1"/>
    <property type="gene ID" value="ENSECAG00000000152.4"/>
</dbReference>
<dbReference type="GeneID" id="100034127"/>
<dbReference type="KEGG" id="ecb:100034127"/>
<dbReference type="CTD" id="4254"/>
<dbReference type="VGNC" id="VGNC:49477">
    <property type="gene designation" value="KITLG"/>
</dbReference>
<dbReference type="GeneTree" id="ENSGT00390000018272"/>
<dbReference type="HOGENOM" id="CLU_090207_0_0_1"/>
<dbReference type="InParanoid" id="Q95MD2"/>
<dbReference type="OrthoDB" id="8445223at2759"/>
<dbReference type="Proteomes" id="UP000002281">
    <property type="component" value="Chromosome 28"/>
</dbReference>
<dbReference type="Bgee" id="ENSECAG00000000152">
    <property type="expression patterns" value="Expressed in epithelium of bronchus and 21 other cell types or tissues"/>
</dbReference>
<dbReference type="GO" id="GO:0005737">
    <property type="term" value="C:cytoplasm"/>
    <property type="evidence" value="ECO:0000250"/>
    <property type="project" value="UniProtKB"/>
</dbReference>
<dbReference type="GO" id="GO:0005856">
    <property type="term" value="C:cytoskeleton"/>
    <property type="evidence" value="ECO:0007669"/>
    <property type="project" value="UniProtKB-SubCell"/>
</dbReference>
<dbReference type="GO" id="GO:0005576">
    <property type="term" value="C:extracellular region"/>
    <property type="evidence" value="ECO:0007669"/>
    <property type="project" value="UniProtKB-SubCell"/>
</dbReference>
<dbReference type="GO" id="GO:0030175">
    <property type="term" value="C:filopodium"/>
    <property type="evidence" value="ECO:0000250"/>
    <property type="project" value="UniProtKB"/>
</dbReference>
<dbReference type="GO" id="GO:0030027">
    <property type="term" value="C:lamellipodium"/>
    <property type="evidence" value="ECO:0000250"/>
    <property type="project" value="UniProtKB"/>
</dbReference>
<dbReference type="GO" id="GO:0005886">
    <property type="term" value="C:plasma membrane"/>
    <property type="evidence" value="ECO:0000250"/>
    <property type="project" value="UniProtKB"/>
</dbReference>
<dbReference type="GO" id="GO:0005125">
    <property type="term" value="F:cytokine activity"/>
    <property type="evidence" value="ECO:0000318"/>
    <property type="project" value="GO_Central"/>
</dbReference>
<dbReference type="GO" id="GO:0008083">
    <property type="term" value="F:growth factor activity"/>
    <property type="evidence" value="ECO:0007669"/>
    <property type="project" value="UniProtKB-KW"/>
</dbReference>
<dbReference type="GO" id="GO:0005173">
    <property type="term" value="F:stem cell factor receptor binding"/>
    <property type="evidence" value="ECO:0000318"/>
    <property type="project" value="GO_Central"/>
</dbReference>
<dbReference type="GO" id="GO:0007155">
    <property type="term" value="P:cell adhesion"/>
    <property type="evidence" value="ECO:0007669"/>
    <property type="project" value="UniProtKB-KW"/>
</dbReference>
<dbReference type="GO" id="GO:0008284">
    <property type="term" value="P:positive regulation of cell population proliferation"/>
    <property type="evidence" value="ECO:0000318"/>
    <property type="project" value="GO_Central"/>
</dbReference>
<dbReference type="FunFam" id="1.20.1250.10:FF:000004">
    <property type="entry name" value="Kit ligand"/>
    <property type="match status" value="1"/>
</dbReference>
<dbReference type="Gene3D" id="1.20.1250.10">
    <property type="match status" value="1"/>
</dbReference>
<dbReference type="InterPro" id="IPR009079">
    <property type="entry name" value="4_helix_cytokine-like_core"/>
</dbReference>
<dbReference type="InterPro" id="IPR003452">
    <property type="entry name" value="SCF"/>
</dbReference>
<dbReference type="PANTHER" id="PTHR11574">
    <property type="entry name" value="KIT LIGAND"/>
    <property type="match status" value="1"/>
</dbReference>
<dbReference type="PANTHER" id="PTHR11574:SF0">
    <property type="entry name" value="KIT LIGAND"/>
    <property type="match status" value="1"/>
</dbReference>
<dbReference type="Pfam" id="PF02404">
    <property type="entry name" value="SCF"/>
    <property type="match status" value="1"/>
</dbReference>
<dbReference type="PIRSF" id="PIRSF015599">
    <property type="entry name" value="SCF"/>
    <property type="match status" value="1"/>
</dbReference>
<dbReference type="SUPFAM" id="SSF47266">
    <property type="entry name" value="4-helical cytokines"/>
    <property type="match status" value="1"/>
</dbReference>
<gene>
    <name type="primary">KITLG</name>
    <name type="synonym">MGF</name>
    <name type="synonym">SCF</name>
</gene>
<evidence type="ECO:0000250" key="1"/>
<evidence type="ECO:0000250" key="2">
    <source>
        <dbReference type="UniProtKB" id="P21583"/>
    </source>
</evidence>
<evidence type="ECO:0000255" key="3"/>
<evidence type="ECO:0000305" key="4"/>
<reference key="1">
    <citation type="submission" date="2001-07" db="EMBL/GenBank/DDBJ databases">
        <title>Equus caballus mast cell growth factor (MGF).</title>
        <authorList>
            <person name="Terry R.R."/>
            <person name="Mickelson J.R."/>
            <person name="Schmutz S."/>
            <person name="Cothran E.G."/>
            <person name="Bailey E."/>
        </authorList>
    </citation>
    <scope>NUCLEOTIDE SEQUENCE OF 4-264</scope>
</reference>
<reference key="2">
    <citation type="submission" date="1998-03" db="EMBL/GenBank/DDBJ databases">
        <title>An equine sequence homologous to stem cell factor (KIT-ligand).</title>
        <authorList>
            <person name="Rieder S."/>
            <person name="Checa-Cortes M.L."/>
            <person name="Joerg H."/>
            <person name="Stranzinger G."/>
        </authorList>
    </citation>
    <scope>NUCLEOTIDE SEQUENCE OF 12-267</scope>
    <source>
        <tissue>Skin</tissue>
    </source>
</reference>
<reference key="3">
    <citation type="submission" date="2001-04" db="EMBL/GenBank/DDBJ databases">
        <title>Evaluation of MGF as the candidate gene for Appaloosa spotting.</title>
        <authorList>
            <person name="Terry R.R."/>
            <person name="Bailey E.F."/>
            <person name="Cothran E.G."/>
        </authorList>
    </citation>
    <scope>NUCLEOTIDE SEQUENCE [GENOMIC DNA] OF 107-202 AND 227-274</scope>
</reference>
<reference key="4">
    <citation type="submission" date="2000-01" db="EMBL/GenBank/DDBJ databases">
        <title>A primary Human-Horse comparative gene map.</title>
        <authorList>
            <person name="Caetano A.R."/>
            <person name="Shiue Y.-L."/>
            <person name="Lyons L.A."/>
            <person name="Laughlin T.F."/>
            <person name="O'Brien S.J."/>
            <person name="Murray J.D."/>
            <person name="Bowling A.T."/>
        </authorList>
    </citation>
    <scope>NUCLEOTIDE SEQUENCE OF 147-197</scope>
</reference>
<name>SCF_HORSE</name>
<feature type="signal peptide" evidence="3">
    <location>
        <begin position="1"/>
        <end position="25"/>
    </location>
</feature>
<feature type="chain" id="PRO_0000031912" description="Kit ligand">
    <location>
        <begin position="26"/>
        <end position="274"/>
    </location>
</feature>
<feature type="chain" id="PRO_0000403390" description="Soluble KIT ligand" evidence="1">
    <location>
        <begin position="26"/>
        <end position="191"/>
    </location>
</feature>
<feature type="chain" id="PRO_0000292275" description="Processed kit ligand">
    <location>
        <begin position="26"/>
        <end status="unknown"/>
    </location>
</feature>
<feature type="topological domain" description="Extracellular" evidence="3">
    <location>
        <begin position="26"/>
        <end position="215"/>
    </location>
</feature>
<feature type="transmembrane region" description="Helical" evidence="3">
    <location>
        <begin position="216"/>
        <end position="238"/>
    </location>
</feature>
<feature type="topological domain" description="Cytoplasmic" evidence="3">
    <location>
        <begin position="239"/>
        <end position="274"/>
    </location>
</feature>
<feature type="glycosylation site" description="N-linked (GlcNAc...) asparagine" evidence="3">
    <location>
        <position position="90"/>
    </location>
</feature>
<feature type="glycosylation site" description="N-linked (GlcNAc...) asparagine" evidence="3">
    <location>
        <position position="97"/>
    </location>
</feature>
<feature type="glycosylation site" description="N-linked (GlcNAc...) asparagine" evidence="3">
    <location>
        <position position="145"/>
    </location>
</feature>
<feature type="glycosylation site" description="N-linked (GlcNAc...) asparagine" evidence="3">
    <location>
        <position position="196"/>
    </location>
</feature>
<feature type="glycosylation site" description="N-linked (GlcNAc...) asparagine" evidence="3">
    <location>
        <position position="207"/>
    </location>
</feature>
<feature type="disulfide bond" evidence="1">
    <location>
        <begin position="29"/>
        <end position="114"/>
    </location>
</feature>
<feature type="disulfide bond" evidence="1">
    <location>
        <begin position="68"/>
        <end position="164"/>
    </location>
</feature>
<feature type="sequence conflict" description="In Ref. 2; AAC97076." evidence="4" ref="2">
    <original>Q</original>
    <variation>P</variation>
    <location>
        <position position="15"/>
    </location>
</feature>
<feature type="sequence conflict" description="In Ref. 3; AAK63250." evidence="4" ref="3">
    <location>
        <position position="241"/>
    </location>
</feature>
<accession>Q95MD2</accession>
<accession>O62765</accession>
<accession>Q95MG7</accession>
<accession>Q95MG8</accession>
<accession>Q9N1Y5</accession>
<sequence>MKKTQTWIITCIYLQLLLFNPLVKTKGICENRVTDDVKDVTKLVANLPKDYKITLKYVPGMDVLPSHCWISEMVQHLSVSLTDLLEKFSNISEGLSNYSIIDKLVKIVDDLVECMEEHSSENVKKSYKSQESRLFTPEEFFRIFNRSIDAFKDLEMVVSKTSECVVSSTLSPEKDSRVSVTKPFMLPPVAASSLRNDSSSSNRKASNFTGDSNLQWAAMALPAFFSLVIGFAFGALYWKKKQPNLTRAVENIQINEEDNEISMLQEKEREFQEV</sequence>
<protein>
    <recommendedName>
        <fullName>Kit ligand</fullName>
    </recommendedName>
    <alternativeName>
        <fullName>Mast cell growth factor</fullName>
        <shortName>MGF</shortName>
    </alternativeName>
    <alternativeName>
        <fullName>Stem cell factor</fullName>
        <shortName>SCF</shortName>
    </alternativeName>
    <alternativeName>
        <fullName>c-Kit ligand</fullName>
    </alternativeName>
    <component>
        <recommendedName>
            <fullName>Soluble KIT ligand</fullName>
            <shortName>sKITLG</shortName>
        </recommendedName>
    </component>
    <component>
        <recommendedName>
            <fullName>Processed kit ligand</fullName>
        </recommendedName>
    </component>
</protein>
<proteinExistence type="evidence at transcript level"/>
<organism>
    <name type="scientific">Equus caballus</name>
    <name type="common">Horse</name>
    <dbReference type="NCBI Taxonomy" id="9796"/>
    <lineage>
        <taxon>Eukaryota</taxon>
        <taxon>Metazoa</taxon>
        <taxon>Chordata</taxon>
        <taxon>Craniata</taxon>
        <taxon>Vertebrata</taxon>
        <taxon>Euteleostomi</taxon>
        <taxon>Mammalia</taxon>
        <taxon>Eutheria</taxon>
        <taxon>Laurasiatheria</taxon>
        <taxon>Perissodactyla</taxon>
        <taxon>Equidae</taxon>
        <taxon>Equus</taxon>
    </lineage>
</organism>
<keyword id="KW-0130">Cell adhesion</keyword>
<keyword id="KW-1003">Cell membrane</keyword>
<keyword id="KW-0966">Cell projection</keyword>
<keyword id="KW-0963">Cytoplasm</keyword>
<keyword id="KW-0206">Cytoskeleton</keyword>
<keyword id="KW-1015">Disulfide bond</keyword>
<keyword id="KW-0325">Glycoprotein</keyword>
<keyword id="KW-0339">Growth factor</keyword>
<keyword id="KW-0472">Membrane</keyword>
<keyword id="KW-1185">Reference proteome</keyword>
<keyword id="KW-0964">Secreted</keyword>
<keyword id="KW-0732">Signal</keyword>
<keyword id="KW-0812">Transmembrane</keyword>
<keyword id="KW-1133">Transmembrane helix</keyword>
<comment type="function">
    <text evidence="1">Stimulates the proliferation of mast cells. Able to augment the proliferation of both myeloid and lymphoid hematopoietic progenitors in bone marrow culture. Also mediates cell-cell adhesion. Acts synergistically with other cytokines, probably interleukins (By similarity).</text>
</comment>
<comment type="subunit">
    <text evidence="4">Homodimer, non-covalently linked.</text>
</comment>
<comment type="subcellular location">
    <subcellularLocation>
        <location evidence="2">Cytoplasm</location>
    </subcellularLocation>
    <subcellularLocation>
        <location evidence="1">Cytoplasm</location>
        <location evidence="1">Cytoskeleton</location>
    </subcellularLocation>
    <subcellularLocation>
        <location evidence="2">Cell membrane</location>
        <topology evidence="1">Single-pass type I membrane protein</topology>
    </subcellularLocation>
    <subcellularLocation>
        <location evidence="2">Cell projection</location>
        <location evidence="2">Lamellipodium</location>
    </subcellularLocation>
    <subcellularLocation>
        <location evidence="2">Cell projection</location>
        <location evidence="2">Filopodium</location>
    </subcellularLocation>
</comment>
<comment type="subcellular location">
    <molecule>Processed kit ligand</molecule>
    <subcellularLocation>
        <location evidence="1">Secreted</location>
    </subcellularLocation>
</comment>
<comment type="subcellular location">
    <molecule>Soluble KIT ligand</molecule>
    <subcellularLocation>
        <location evidence="1">Secreted</location>
    </subcellularLocation>
</comment>
<comment type="PTM">
    <text evidence="1">A soluble form is produced by proteolytic processing of the extracellular domain.</text>
</comment>
<comment type="similarity">
    <text evidence="4">Belongs to the SCF family.</text>
</comment>